<name>RS20_LISMF</name>
<keyword id="KW-0687">Ribonucleoprotein</keyword>
<keyword id="KW-0689">Ribosomal protein</keyword>
<keyword id="KW-0694">RNA-binding</keyword>
<keyword id="KW-0699">rRNA-binding</keyword>
<dbReference type="EMBL" id="AE017262">
    <property type="protein sequence ID" value="AAT04274.1"/>
    <property type="molecule type" value="Genomic_DNA"/>
</dbReference>
<dbReference type="RefSeq" id="WP_003726526.1">
    <property type="nucleotide sequence ID" value="NC_002973.6"/>
</dbReference>
<dbReference type="SMR" id="Q71ZJ0"/>
<dbReference type="GeneID" id="93239357"/>
<dbReference type="KEGG" id="lmf:LMOf2365_1499"/>
<dbReference type="HOGENOM" id="CLU_160655_1_0_9"/>
<dbReference type="GO" id="GO:0005829">
    <property type="term" value="C:cytosol"/>
    <property type="evidence" value="ECO:0007669"/>
    <property type="project" value="TreeGrafter"/>
</dbReference>
<dbReference type="GO" id="GO:0015935">
    <property type="term" value="C:small ribosomal subunit"/>
    <property type="evidence" value="ECO:0007669"/>
    <property type="project" value="TreeGrafter"/>
</dbReference>
<dbReference type="GO" id="GO:0070181">
    <property type="term" value="F:small ribosomal subunit rRNA binding"/>
    <property type="evidence" value="ECO:0007669"/>
    <property type="project" value="TreeGrafter"/>
</dbReference>
<dbReference type="GO" id="GO:0003735">
    <property type="term" value="F:structural constituent of ribosome"/>
    <property type="evidence" value="ECO:0007669"/>
    <property type="project" value="InterPro"/>
</dbReference>
<dbReference type="GO" id="GO:0006412">
    <property type="term" value="P:translation"/>
    <property type="evidence" value="ECO:0007669"/>
    <property type="project" value="UniProtKB-UniRule"/>
</dbReference>
<dbReference type="FunFam" id="1.20.58.110:FF:000001">
    <property type="entry name" value="30S ribosomal protein S20"/>
    <property type="match status" value="1"/>
</dbReference>
<dbReference type="Gene3D" id="1.20.58.110">
    <property type="entry name" value="Ribosomal protein S20"/>
    <property type="match status" value="1"/>
</dbReference>
<dbReference type="HAMAP" id="MF_00500">
    <property type="entry name" value="Ribosomal_bS20"/>
    <property type="match status" value="1"/>
</dbReference>
<dbReference type="InterPro" id="IPR002583">
    <property type="entry name" value="Ribosomal_bS20"/>
</dbReference>
<dbReference type="InterPro" id="IPR036510">
    <property type="entry name" value="Ribosomal_bS20_sf"/>
</dbReference>
<dbReference type="NCBIfam" id="TIGR00029">
    <property type="entry name" value="S20"/>
    <property type="match status" value="1"/>
</dbReference>
<dbReference type="PANTHER" id="PTHR33398">
    <property type="entry name" value="30S RIBOSOMAL PROTEIN S20"/>
    <property type="match status" value="1"/>
</dbReference>
<dbReference type="PANTHER" id="PTHR33398:SF1">
    <property type="entry name" value="SMALL RIBOSOMAL SUBUNIT PROTEIN BS20C"/>
    <property type="match status" value="1"/>
</dbReference>
<dbReference type="Pfam" id="PF01649">
    <property type="entry name" value="Ribosomal_S20p"/>
    <property type="match status" value="1"/>
</dbReference>
<dbReference type="SUPFAM" id="SSF46992">
    <property type="entry name" value="Ribosomal protein S20"/>
    <property type="match status" value="1"/>
</dbReference>
<proteinExistence type="inferred from homology"/>
<feature type="chain" id="PRO_0000167985" description="Small ribosomal subunit protein bS20">
    <location>
        <begin position="1"/>
        <end position="84"/>
    </location>
</feature>
<feature type="region of interest" description="Disordered" evidence="2">
    <location>
        <begin position="1"/>
        <end position="28"/>
    </location>
</feature>
<comment type="function">
    <text evidence="1">Binds directly to 16S ribosomal RNA.</text>
</comment>
<comment type="similarity">
    <text evidence="1">Belongs to the bacterial ribosomal protein bS20 family.</text>
</comment>
<organism>
    <name type="scientific">Listeria monocytogenes serotype 4b (strain F2365)</name>
    <dbReference type="NCBI Taxonomy" id="265669"/>
    <lineage>
        <taxon>Bacteria</taxon>
        <taxon>Bacillati</taxon>
        <taxon>Bacillota</taxon>
        <taxon>Bacilli</taxon>
        <taxon>Bacillales</taxon>
        <taxon>Listeriaceae</taxon>
        <taxon>Listeria</taxon>
    </lineage>
</organism>
<evidence type="ECO:0000255" key="1">
    <source>
        <dbReference type="HAMAP-Rule" id="MF_00500"/>
    </source>
</evidence>
<evidence type="ECO:0000256" key="2">
    <source>
        <dbReference type="SAM" id="MobiDB-lite"/>
    </source>
</evidence>
<evidence type="ECO:0000305" key="3"/>
<gene>
    <name evidence="1" type="primary">rpsT</name>
    <name type="ordered locus">LMOf2365_1499</name>
</gene>
<sequence length="84" mass="9169">MPNIKSAIKRVKTAETRNSRNASQRSAMRTAIKKFDEAAANNADNAKDLYVEASKKLDSAVSKGLIHKNNAARNKSRLAAKLAK</sequence>
<protein>
    <recommendedName>
        <fullName evidence="1">Small ribosomal subunit protein bS20</fullName>
    </recommendedName>
    <alternativeName>
        <fullName evidence="3">30S ribosomal protein S20</fullName>
    </alternativeName>
</protein>
<reference key="1">
    <citation type="journal article" date="2004" name="Nucleic Acids Res.">
        <title>Whole genome comparisons of serotype 4b and 1/2a strains of the food-borne pathogen Listeria monocytogenes reveal new insights into the core genome components of this species.</title>
        <authorList>
            <person name="Nelson K.E."/>
            <person name="Fouts D.E."/>
            <person name="Mongodin E.F."/>
            <person name="Ravel J."/>
            <person name="DeBoy R.T."/>
            <person name="Kolonay J.F."/>
            <person name="Rasko D.A."/>
            <person name="Angiuoli S.V."/>
            <person name="Gill S.R."/>
            <person name="Paulsen I.T."/>
            <person name="Peterson J.D."/>
            <person name="White O."/>
            <person name="Nelson W.C."/>
            <person name="Nierman W.C."/>
            <person name="Beanan M.J."/>
            <person name="Brinkac L.M."/>
            <person name="Daugherty S.C."/>
            <person name="Dodson R.J."/>
            <person name="Durkin A.S."/>
            <person name="Madupu R."/>
            <person name="Haft D.H."/>
            <person name="Selengut J."/>
            <person name="Van Aken S.E."/>
            <person name="Khouri H.M."/>
            <person name="Fedorova N."/>
            <person name="Forberger H.A."/>
            <person name="Tran B."/>
            <person name="Kathariou S."/>
            <person name="Wonderling L.D."/>
            <person name="Uhlich G.A."/>
            <person name="Bayles D.O."/>
            <person name="Luchansky J.B."/>
            <person name="Fraser C.M."/>
        </authorList>
    </citation>
    <scope>NUCLEOTIDE SEQUENCE [LARGE SCALE GENOMIC DNA]</scope>
    <source>
        <strain>F2365</strain>
    </source>
</reference>
<accession>Q71ZJ0</accession>